<reference key="1">
    <citation type="journal article" date="2005" name="Genome Res.">
        <title>Complete genome sequence of the hyperthermophilic archaeon Thermococcus kodakaraensis KOD1 and comparison with Pyrococcus genomes.</title>
        <authorList>
            <person name="Fukui T."/>
            <person name="Atomi H."/>
            <person name="Kanai T."/>
            <person name="Matsumi R."/>
            <person name="Fujiwara S."/>
            <person name="Imanaka T."/>
        </authorList>
    </citation>
    <scope>NUCLEOTIDE SEQUENCE [LARGE SCALE GENOMIC DNA]</scope>
    <source>
        <strain>ATCC BAA-918 / JCM 12380 / KOD1</strain>
    </source>
</reference>
<reference evidence="4 5 6" key="2">
    <citation type="journal article" date="2020" name="Nature">
        <title>Dynamic RNA acetylation revealed by quantitative cross-evolutionary mapping.</title>
        <authorList>
            <person name="Sas-Chen A."/>
            <person name="Thomas J.M."/>
            <person name="Matzov D."/>
            <person name="Taoka M."/>
            <person name="Nance K.D."/>
            <person name="Nir R."/>
            <person name="Bryson K.M."/>
            <person name="Shachar R."/>
            <person name="Liman G.L.S."/>
            <person name="Burkhart B.W."/>
            <person name="Gamage S.T."/>
            <person name="Nobe Y."/>
            <person name="Briney C.A."/>
            <person name="Levy M.J."/>
            <person name="Fuchs R.T."/>
            <person name="Robb G.B."/>
            <person name="Hartmann J."/>
            <person name="Sharma S."/>
            <person name="Lin Q."/>
            <person name="Florens L."/>
            <person name="Washburn M.P."/>
            <person name="Isobe T."/>
            <person name="Santangelo T.J."/>
            <person name="Shalev-Benami M."/>
            <person name="Meier J.L."/>
            <person name="Schwartz S."/>
        </authorList>
    </citation>
    <scope>STRUCTURE BY ELECTRON MICROSCOPY (2.55 ANGSTROMS) IN 70S RIBOSOME</scope>
    <scope>SUBUNIT</scope>
    <source>
        <strain>ATCC BAA-918 / TS559</strain>
    </source>
</reference>
<feature type="chain" id="PRO_0000130260" description="Small ribosomal subunit protein uS3">
    <location>
        <begin position="1"/>
        <end position="209"/>
    </location>
</feature>
<feature type="domain" description="KH type-2" evidence="1">
    <location>
        <begin position="17"/>
        <end position="86"/>
    </location>
</feature>
<sequence length="209" mass="23354">MAIERYFIKEGVKEMLIDEFLEKELRRAGYGGLDIKKTPLGTKVTIFAANPGYVIGRGGRRIRELTRILEKQFGLENPQIEVEEIKNPYLNAKVQAVRLAQALERGIHFRRAAYSAIRAIMRNGARGVEIRLSGKLTGERAKSVRFYQGYLAKVGNPAETLVSRGYAQAQLKLGVIGVKVSIMPPDAKLPDEIEIKEIVEEEVSANEAQ</sequence>
<accession>Q5JDH5</accession>
<keyword id="KW-0002">3D-structure</keyword>
<keyword id="KW-1185">Reference proteome</keyword>
<keyword id="KW-0687">Ribonucleoprotein</keyword>
<keyword id="KW-0689">Ribosomal protein</keyword>
<keyword id="KW-0694">RNA-binding</keyword>
<keyword id="KW-0699">rRNA-binding</keyword>
<gene>
    <name evidence="1" type="primary">rps3</name>
    <name type="ordered locus">TK1536</name>
</gene>
<comment type="function">
    <text evidence="1">Binds the lower part of the 30S subunit head.</text>
</comment>
<comment type="subunit">
    <text evidence="1 2">Part of the 30S ribosomal subunit.</text>
</comment>
<comment type="similarity">
    <text evidence="1">Belongs to the universal ribosomal protein uS3 family.</text>
</comment>
<protein>
    <recommendedName>
        <fullName evidence="1">Small ribosomal subunit protein uS3</fullName>
    </recommendedName>
    <alternativeName>
        <fullName evidence="3">30S ribosomal protein S3</fullName>
    </alternativeName>
</protein>
<name>RS3_THEKO</name>
<dbReference type="EMBL" id="AP006878">
    <property type="protein sequence ID" value="BAD85725.1"/>
    <property type="molecule type" value="Genomic_DNA"/>
</dbReference>
<dbReference type="RefSeq" id="WP_011250487.1">
    <property type="nucleotide sequence ID" value="NC_006624.1"/>
</dbReference>
<dbReference type="PDB" id="6SKF">
    <property type="method" value="EM"/>
    <property type="resolution" value="2.95 A"/>
    <property type="chains" value="Ac=1-209"/>
</dbReference>
<dbReference type="PDB" id="6SKG">
    <property type="method" value="EM"/>
    <property type="resolution" value="2.65 A"/>
    <property type="chains" value="Ac=1-209"/>
</dbReference>
<dbReference type="PDB" id="6TH6">
    <property type="method" value="EM"/>
    <property type="resolution" value="2.55 A"/>
    <property type="chains" value="Ac=1-209"/>
</dbReference>
<dbReference type="PDBsum" id="6SKF"/>
<dbReference type="PDBsum" id="6SKG"/>
<dbReference type="PDBsum" id="6TH6"/>
<dbReference type="EMDB" id="EMD-10223"/>
<dbReference type="EMDB" id="EMD-10224"/>
<dbReference type="EMDB" id="EMD-10503"/>
<dbReference type="SMR" id="Q5JDH5"/>
<dbReference type="FunCoup" id="Q5JDH5">
    <property type="interactions" value="168"/>
</dbReference>
<dbReference type="STRING" id="69014.TK1536"/>
<dbReference type="EnsemblBacteria" id="BAD85725">
    <property type="protein sequence ID" value="BAD85725"/>
    <property type="gene ID" value="TK1536"/>
</dbReference>
<dbReference type="GeneID" id="78448064"/>
<dbReference type="KEGG" id="tko:TK1536"/>
<dbReference type="PATRIC" id="fig|69014.16.peg.1496"/>
<dbReference type="eggNOG" id="arCOG04097">
    <property type="taxonomic scope" value="Archaea"/>
</dbReference>
<dbReference type="HOGENOM" id="CLU_058591_1_1_2"/>
<dbReference type="InParanoid" id="Q5JDH5"/>
<dbReference type="OrthoDB" id="9126at2157"/>
<dbReference type="PhylomeDB" id="Q5JDH5"/>
<dbReference type="Proteomes" id="UP000000536">
    <property type="component" value="Chromosome"/>
</dbReference>
<dbReference type="GO" id="GO:0022627">
    <property type="term" value="C:cytosolic small ribosomal subunit"/>
    <property type="evidence" value="ECO:0000318"/>
    <property type="project" value="GO_Central"/>
</dbReference>
<dbReference type="GO" id="GO:0019843">
    <property type="term" value="F:rRNA binding"/>
    <property type="evidence" value="ECO:0007669"/>
    <property type="project" value="UniProtKB-UniRule"/>
</dbReference>
<dbReference type="GO" id="GO:0003735">
    <property type="term" value="F:structural constituent of ribosome"/>
    <property type="evidence" value="ECO:0000318"/>
    <property type="project" value="GO_Central"/>
</dbReference>
<dbReference type="GO" id="GO:0006412">
    <property type="term" value="P:translation"/>
    <property type="evidence" value="ECO:0007669"/>
    <property type="project" value="UniProtKB-UniRule"/>
</dbReference>
<dbReference type="CDD" id="cd02411">
    <property type="entry name" value="KH-II_30S_S3_arch"/>
    <property type="match status" value="1"/>
</dbReference>
<dbReference type="FunFam" id="3.30.1140.32:FF:000012">
    <property type="entry name" value="30S ribosomal protein S3"/>
    <property type="match status" value="1"/>
</dbReference>
<dbReference type="FunFam" id="3.30.300.20:FF:000001">
    <property type="entry name" value="30S ribosomal protein S3"/>
    <property type="match status" value="1"/>
</dbReference>
<dbReference type="Gene3D" id="3.30.300.20">
    <property type="match status" value="1"/>
</dbReference>
<dbReference type="Gene3D" id="3.30.1140.32">
    <property type="entry name" value="Ribosomal protein S3, C-terminal domain"/>
    <property type="match status" value="1"/>
</dbReference>
<dbReference type="HAMAP" id="MF_01309_A">
    <property type="entry name" value="Ribosomal_uS3_A"/>
    <property type="match status" value="1"/>
</dbReference>
<dbReference type="InterPro" id="IPR004087">
    <property type="entry name" value="KH_dom"/>
</dbReference>
<dbReference type="InterPro" id="IPR015946">
    <property type="entry name" value="KH_dom-like_a/b"/>
</dbReference>
<dbReference type="InterPro" id="IPR004044">
    <property type="entry name" value="KH_dom_type_2"/>
</dbReference>
<dbReference type="InterPro" id="IPR009019">
    <property type="entry name" value="KH_sf_prok-type"/>
</dbReference>
<dbReference type="InterPro" id="IPR036419">
    <property type="entry name" value="Ribosomal_S3_C_sf"/>
</dbReference>
<dbReference type="InterPro" id="IPR027488">
    <property type="entry name" value="Ribosomal_uS3_arc"/>
</dbReference>
<dbReference type="InterPro" id="IPR001351">
    <property type="entry name" value="Ribosomal_uS3_C"/>
</dbReference>
<dbReference type="InterPro" id="IPR005703">
    <property type="entry name" value="Ribosomal_uS3_euk/arc"/>
</dbReference>
<dbReference type="NCBIfam" id="NF003219">
    <property type="entry name" value="PRK04191.1"/>
    <property type="match status" value="1"/>
</dbReference>
<dbReference type="NCBIfam" id="TIGR01008">
    <property type="entry name" value="uS3_euk_arch"/>
    <property type="match status" value="1"/>
</dbReference>
<dbReference type="PANTHER" id="PTHR11760">
    <property type="entry name" value="30S/40S RIBOSOMAL PROTEIN S3"/>
    <property type="match status" value="1"/>
</dbReference>
<dbReference type="PANTHER" id="PTHR11760:SF32">
    <property type="entry name" value="SMALL RIBOSOMAL SUBUNIT PROTEIN US3"/>
    <property type="match status" value="1"/>
</dbReference>
<dbReference type="Pfam" id="PF07650">
    <property type="entry name" value="KH_2"/>
    <property type="match status" value="1"/>
</dbReference>
<dbReference type="Pfam" id="PF00189">
    <property type="entry name" value="Ribosomal_S3_C"/>
    <property type="match status" value="1"/>
</dbReference>
<dbReference type="SMART" id="SM00322">
    <property type="entry name" value="KH"/>
    <property type="match status" value="1"/>
</dbReference>
<dbReference type="SUPFAM" id="SSF54814">
    <property type="entry name" value="Prokaryotic type KH domain (KH-domain type II)"/>
    <property type="match status" value="1"/>
</dbReference>
<dbReference type="SUPFAM" id="SSF54821">
    <property type="entry name" value="Ribosomal protein S3 C-terminal domain"/>
    <property type="match status" value="1"/>
</dbReference>
<dbReference type="PROSITE" id="PS50823">
    <property type="entry name" value="KH_TYPE_2"/>
    <property type="match status" value="1"/>
</dbReference>
<organism>
    <name type="scientific">Thermococcus kodakarensis (strain ATCC BAA-918 / JCM 12380 / KOD1)</name>
    <name type="common">Pyrococcus kodakaraensis (strain KOD1)</name>
    <dbReference type="NCBI Taxonomy" id="69014"/>
    <lineage>
        <taxon>Archaea</taxon>
        <taxon>Methanobacteriati</taxon>
        <taxon>Methanobacteriota</taxon>
        <taxon>Thermococci</taxon>
        <taxon>Thermococcales</taxon>
        <taxon>Thermococcaceae</taxon>
        <taxon>Thermococcus</taxon>
    </lineage>
</organism>
<evidence type="ECO:0000255" key="1">
    <source>
        <dbReference type="HAMAP-Rule" id="MF_01309"/>
    </source>
</evidence>
<evidence type="ECO:0000269" key="2">
    <source>
    </source>
</evidence>
<evidence type="ECO:0000305" key="3"/>
<evidence type="ECO:0007744" key="4">
    <source>
        <dbReference type="PDB" id="6SKF"/>
    </source>
</evidence>
<evidence type="ECO:0007744" key="5">
    <source>
        <dbReference type="PDB" id="6SKG"/>
    </source>
</evidence>
<evidence type="ECO:0007744" key="6">
    <source>
        <dbReference type="PDB" id="6TH6"/>
    </source>
</evidence>
<proteinExistence type="evidence at protein level"/>